<name>APT_CLOB8</name>
<organism>
    <name type="scientific">Clostridium beijerinckii (strain ATCC 51743 / NCIMB 8052)</name>
    <name type="common">Clostridium acetobutylicum</name>
    <dbReference type="NCBI Taxonomy" id="290402"/>
    <lineage>
        <taxon>Bacteria</taxon>
        <taxon>Bacillati</taxon>
        <taxon>Bacillota</taxon>
        <taxon>Clostridia</taxon>
        <taxon>Eubacteriales</taxon>
        <taxon>Clostridiaceae</taxon>
        <taxon>Clostridium</taxon>
    </lineage>
</organism>
<proteinExistence type="inferred from homology"/>
<comment type="function">
    <text evidence="1">Catalyzes a salvage reaction resulting in the formation of AMP, that is energically less costly than de novo synthesis.</text>
</comment>
<comment type="catalytic activity">
    <reaction evidence="1">
        <text>AMP + diphosphate = 5-phospho-alpha-D-ribose 1-diphosphate + adenine</text>
        <dbReference type="Rhea" id="RHEA:16609"/>
        <dbReference type="ChEBI" id="CHEBI:16708"/>
        <dbReference type="ChEBI" id="CHEBI:33019"/>
        <dbReference type="ChEBI" id="CHEBI:58017"/>
        <dbReference type="ChEBI" id="CHEBI:456215"/>
        <dbReference type="EC" id="2.4.2.7"/>
    </reaction>
</comment>
<comment type="pathway">
    <text evidence="1">Purine metabolism; AMP biosynthesis via salvage pathway; AMP from adenine: step 1/1.</text>
</comment>
<comment type="subunit">
    <text evidence="1">Homodimer.</text>
</comment>
<comment type="subcellular location">
    <subcellularLocation>
        <location evidence="1">Cytoplasm</location>
    </subcellularLocation>
</comment>
<comment type="similarity">
    <text evidence="1">Belongs to the purine/pyrimidine phosphoribosyltransferase family.</text>
</comment>
<evidence type="ECO:0000255" key="1">
    <source>
        <dbReference type="HAMAP-Rule" id="MF_00004"/>
    </source>
</evidence>
<keyword id="KW-0963">Cytoplasm</keyword>
<keyword id="KW-0328">Glycosyltransferase</keyword>
<keyword id="KW-0660">Purine salvage</keyword>
<keyword id="KW-0808">Transferase</keyword>
<dbReference type="EC" id="2.4.2.7" evidence="1"/>
<dbReference type="EMBL" id="CP000721">
    <property type="protein sequence ID" value="ABR33715.1"/>
    <property type="molecule type" value="Genomic_DNA"/>
</dbReference>
<dbReference type="RefSeq" id="WP_011968867.1">
    <property type="nucleotide sequence ID" value="NC_009617.1"/>
</dbReference>
<dbReference type="SMR" id="A6LTN5"/>
<dbReference type="KEGG" id="cbe:Cbei_1539"/>
<dbReference type="eggNOG" id="COG0503">
    <property type="taxonomic scope" value="Bacteria"/>
</dbReference>
<dbReference type="HOGENOM" id="CLU_063339_3_0_9"/>
<dbReference type="UniPathway" id="UPA00588">
    <property type="reaction ID" value="UER00646"/>
</dbReference>
<dbReference type="Proteomes" id="UP000000565">
    <property type="component" value="Chromosome"/>
</dbReference>
<dbReference type="GO" id="GO:0005737">
    <property type="term" value="C:cytoplasm"/>
    <property type="evidence" value="ECO:0007669"/>
    <property type="project" value="UniProtKB-SubCell"/>
</dbReference>
<dbReference type="GO" id="GO:0002055">
    <property type="term" value="F:adenine binding"/>
    <property type="evidence" value="ECO:0007669"/>
    <property type="project" value="TreeGrafter"/>
</dbReference>
<dbReference type="GO" id="GO:0003999">
    <property type="term" value="F:adenine phosphoribosyltransferase activity"/>
    <property type="evidence" value="ECO:0007669"/>
    <property type="project" value="UniProtKB-UniRule"/>
</dbReference>
<dbReference type="GO" id="GO:0016208">
    <property type="term" value="F:AMP binding"/>
    <property type="evidence" value="ECO:0007669"/>
    <property type="project" value="TreeGrafter"/>
</dbReference>
<dbReference type="GO" id="GO:0006168">
    <property type="term" value="P:adenine salvage"/>
    <property type="evidence" value="ECO:0007669"/>
    <property type="project" value="InterPro"/>
</dbReference>
<dbReference type="GO" id="GO:0044209">
    <property type="term" value="P:AMP salvage"/>
    <property type="evidence" value="ECO:0007669"/>
    <property type="project" value="UniProtKB-UniRule"/>
</dbReference>
<dbReference type="GO" id="GO:0006166">
    <property type="term" value="P:purine ribonucleoside salvage"/>
    <property type="evidence" value="ECO:0007669"/>
    <property type="project" value="UniProtKB-KW"/>
</dbReference>
<dbReference type="CDD" id="cd06223">
    <property type="entry name" value="PRTases_typeI"/>
    <property type="match status" value="1"/>
</dbReference>
<dbReference type="FunFam" id="3.40.50.2020:FF:000004">
    <property type="entry name" value="Adenine phosphoribosyltransferase"/>
    <property type="match status" value="1"/>
</dbReference>
<dbReference type="Gene3D" id="3.40.50.2020">
    <property type="match status" value="1"/>
</dbReference>
<dbReference type="HAMAP" id="MF_00004">
    <property type="entry name" value="Aden_phosphoribosyltr"/>
    <property type="match status" value="1"/>
</dbReference>
<dbReference type="InterPro" id="IPR005764">
    <property type="entry name" value="Ade_phspho_trans"/>
</dbReference>
<dbReference type="InterPro" id="IPR000836">
    <property type="entry name" value="PRibTrfase_dom"/>
</dbReference>
<dbReference type="InterPro" id="IPR029057">
    <property type="entry name" value="PRTase-like"/>
</dbReference>
<dbReference type="InterPro" id="IPR050054">
    <property type="entry name" value="UPRTase/APRTase"/>
</dbReference>
<dbReference type="NCBIfam" id="TIGR01090">
    <property type="entry name" value="apt"/>
    <property type="match status" value="1"/>
</dbReference>
<dbReference type="NCBIfam" id="NF002633">
    <property type="entry name" value="PRK02304.1-2"/>
    <property type="match status" value="1"/>
</dbReference>
<dbReference type="NCBIfam" id="NF002634">
    <property type="entry name" value="PRK02304.1-3"/>
    <property type="match status" value="1"/>
</dbReference>
<dbReference type="NCBIfam" id="NF002636">
    <property type="entry name" value="PRK02304.1-5"/>
    <property type="match status" value="1"/>
</dbReference>
<dbReference type="PANTHER" id="PTHR32315">
    <property type="entry name" value="ADENINE PHOSPHORIBOSYLTRANSFERASE"/>
    <property type="match status" value="1"/>
</dbReference>
<dbReference type="PANTHER" id="PTHR32315:SF3">
    <property type="entry name" value="ADENINE PHOSPHORIBOSYLTRANSFERASE"/>
    <property type="match status" value="1"/>
</dbReference>
<dbReference type="Pfam" id="PF00156">
    <property type="entry name" value="Pribosyltran"/>
    <property type="match status" value="1"/>
</dbReference>
<dbReference type="SUPFAM" id="SSF53271">
    <property type="entry name" value="PRTase-like"/>
    <property type="match status" value="1"/>
</dbReference>
<reference key="1">
    <citation type="submission" date="2007-06" db="EMBL/GenBank/DDBJ databases">
        <title>Complete sequence of Clostridium beijerinckii NCIMB 8052.</title>
        <authorList>
            <consortium name="US DOE Joint Genome Institute"/>
            <person name="Copeland A."/>
            <person name="Lucas S."/>
            <person name="Lapidus A."/>
            <person name="Barry K."/>
            <person name="Detter J.C."/>
            <person name="Glavina del Rio T."/>
            <person name="Hammon N."/>
            <person name="Israni S."/>
            <person name="Dalin E."/>
            <person name="Tice H."/>
            <person name="Pitluck S."/>
            <person name="Sims D."/>
            <person name="Brettin T."/>
            <person name="Bruce D."/>
            <person name="Tapia R."/>
            <person name="Brainard J."/>
            <person name="Schmutz J."/>
            <person name="Larimer F."/>
            <person name="Land M."/>
            <person name="Hauser L."/>
            <person name="Kyrpides N."/>
            <person name="Mikhailova N."/>
            <person name="Bennet G."/>
            <person name="Cann I."/>
            <person name="Chen J.-S."/>
            <person name="Contreras A.L."/>
            <person name="Jones D."/>
            <person name="Kashket E."/>
            <person name="Mitchell W."/>
            <person name="Stoddard S."/>
            <person name="Schwarz W."/>
            <person name="Qureshi N."/>
            <person name="Young M."/>
            <person name="Shi Z."/>
            <person name="Ezeji T."/>
            <person name="White B."/>
            <person name="Blaschek H."/>
            <person name="Richardson P."/>
        </authorList>
    </citation>
    <scope>NUCLEOTIDE SEQUENCE [LARGE SCALE GENOMIC DNA]</scope>
    <source>
        <strain>ATCC 51743 / NCIMB 8052</strain>
    </source>
</reference>
<sequence>MDLQEKIRVIENFPKEGISFKDITTLIADGEALRETINRIVKHLEDKKIDLIVGPEARGFIFGVPVAYALGVGFIPVRKPGKLPGETISVNYGLEYGEDQLQLHKDAIKPGQRVAVVDDLLATGGTVEGVAKLIEQAGGIVASLDFVIELTELKGKDKLEGYDVLSLVKYDI</sequence>
<accession>A6LTN5</accession>
<protein>
    <recommendedName>
        <fullName evidence="1">Adenine phosphoribosyltransferase</fullName>
        <shortName evidence="1">APRT</shortName>
        <ecNumber evidence="1">2.4.2.7</ecNumber>
    </recommendedName>
</protein>
<gene>
    <name evidence="1" type="primary">apt</name>
    <name type="ordered locus">Cbei_1539</name>
</gene>
<feature type="chain" id="PRO_1000073788" description="Adenine phosphoribosyltransferase">
    <location>
        <begin position="1"/>
        <end position="172"/>
    </location>
</feature>